<evidence type="ECO:0000250" key="1"/>
<evidence type="ECO:0000250" key="2">
    <source>
        <dbReference type="UniProtKB" id="Q6PDA7"/>
    </source>
</evidence>
<evidence type="ECO:0000255" key="3"/>
<evidence type="ECO:0000269" key="4">
    <source>
    </source>
</evidence>
<evidence type="ECO:0000303" key="5">
    <source>
    </source>
</evidence>
<evidence type="ECO:0000305" key="6"/>
<evidence type="ECO:0000312" key="7">
    <source>
        <dbReference type="RGD" id="628905"/>
    </source>
</evidence>
<name>SG11A_RAT</name>
<keyword id="KW-0044">Antibiotic</keyword>
<keyword id="KW-0929">Antimicrobial</keyword>
<keyword id="KW-0211">Defensin</keyword>
<keyword id="KW-1015">Disulfide bond</keyword>
<keyword id="KW-1185">Reference proteome</keyword>
<keyword id="KW-0964">Secreted</keyword>
<keyword id="KW-0732">Signal</keyword>
<dbReference type="EMBL" id="AF217089">
    <property type="protein sequence ID" value="AAL55637.1"/>
    <property type="molecule type" value="Genomic_DNA"/>
</dbReference>
<dbReference type="EMBL" id="AF217088">
    <property type="protein sequence ID" value="AAL55636.1"/>
    <property type="molecule type" value="mRNA"/>
</dbReference>
<dbReference type="RefSeq" id="NP_659555.1">
    <property type="nucleotide sequence ID" value="NM_145087.2"/>
</dbReference>
<dbReference type="FunCoup" id="Q8VBV2">
    <property type="interactions" value="16"/>
</dbReference>
<dbReference type="STRING" id="10116.ENSRNOP00000018741"/>
<dbReference type="PaxDb" id="10116-ENSRNOP00000018741"/>
<dbReference type="Ensembl" id="ENSRNOT00000018741.3">
    <property type="protein sequence ID" value="ENSRNOP00000018741.1"/>
    <property type="gene ID" value="ENSRNOG00000013957.4"/>
</dbReference>
<dbReference type="GeneID" id="246305"/>
<dbReference type="KEGG" id="rno:246305"/>
<dbReference type="UCSC" id="RGD:628905">
    <property type="organism name" value="rat"/>
</dbReference>
<dbReference type="AGR" id="RGD:628905"/>
<dbReference type="CTD" id="653423"/>
<dbReference type="RGD" id="628905">
    <property type="gene designation" value="Spag11a"/>
</dbReference>
<dbReference type="eggNOG" id="ENOG502TDUZ">
    <property type="taxonomic scope" value="Eukaryota"/>
</dbReference>
<dbReference type="GeneTree" id="ENSGT00940000161432"/>
<dbReference type="HOGENOM" id="CLU_197160_0_0_1"/>
<dbReference type="InParanoid" id="Q8VBV2"/>
<dbReference type="OMA" id="RLFFCHF"/>
<dbReference type="OrthoDB" id="9828952at2759"/>
<dbReference type="PhylomeDB" id="Q8VBV2"/>
<dbReference type="PRO" id="PR:Q8VBV2"/>
<dbReference type="Proteomes" id="UP000002494">
    <property type="component" value="Chromosome 16"/>
</dbReference>
<dbReference type="GO" id="GO:0009986">
    <property type="term" value="C:cell surface"/>
    <property type="evidence" value="ECO:0007669"/>
    <property type="project" value="Ensembl"/>
</dbReference>
<dbReference type="GO" id="GO:0005615">
    <property type="term" value="C:extracellular space"/>
    <property type="evidence" value="ECO:0007669"/>
    <property type="project" value="Ensembl"/>
</dbReference>
<dbReference type="GO" id="GO:0019731">
    <property type="term" value="P:antibacterial humoral response"/>
    <property type="evidence" value="ECO:0007669"/>
    <property type="project" value="Ensembl"/>
</dbReference>
<dbReference type="GO" id="GO:0019732">
    <property type="term" value="P:antifungal humoral response"/>
    <property type="evidence" value="ECO:0007669"/>
    <property type="project" value="Ensembl"/>
</dbReference>
<dbReference type="GO" id="GO:0032690">
    <property type="term" value="P:negative regulation of interleukin-1 alpha production"/>
    <property type="evidence" value="ECO:0007669"/>
    <property type="project" value="Ensembl"/>
</dbReference>
<dbReference type="GO" id="GO:0032691">
    <property type="term" value="P:negative regulation of interleukin-1 beta production"/>
    <property type="evidence" value="ECO:0007669"/>
    <property type="project" value="Ensembl"/>
</dbReference>
<dbReference type="InterPro" id="IPR001855">
    <property type="entry name" value="Defensin_beta-like"/>
</dbReference>
<dbReference type="InterPro" id="IPR007988">
    <property type="entry name" value="Sperm_Ag_11A_B"/>
</dbReference>
<dbReference type="PANTHER" id="PTHR14081:SF3">
    <property type="entry name" value="SPERM-ASSOCIATED ANTIGEN 11A"/>
    <property type="match status" value="1"/>
</dbReference>
<dbReference type="PANTHER" id="PTHR14081">
    <property type="entry name" value="SPERM-ASSOCIATED ANTIGEN 11A-RELATED-RELATED"/>
    <property type="match status" value="1"/>
</dbReference>
<dbReference type="Pfam" id="PF00711">
    <property type="entry name" value="Defensin_beta"/>
    <property type="match status" value="1"/>
</dbReference>
<dbReference type="SUPFAM" id="SSF57392">
    <property type="entry name" value="Defensin-like"/>
    <property type="match status" value="1"/>
</dbReference>
<accession>Q8VBV2</accession>
<feature type="signal peptide" evidence="3">
    <location>
        <begin position="1"/>
        <end position="19"/>
    </location>
</feature>
<feature type="chain" id="PRO_0000006956" description="Sperm-associated antigen 11A">
    <location>
        <begin position="20"/>
        <end position="68"/>
    </location>
</feature>
<feature type="disulfide bond" evidence="1">
    <location>
        <begin position="30"/>
        <end position="59"/>
    </location>
</feature>
<feature type="disulfide bond" evidence="1">
    <location>
        <begin position="37"/>
        <end position="52"/>
    </location>
</feature>
<feature type="disulfide bond" evidence="1">
    <location>
        <begin position="42"/>
        <end position="60"/>
    </location>
</feature>
<gene>
    <name evidence="7" type="primary">Spag11a</name>
    <name evidence="7" type="synonym">Bin1b</name>
    <name evidence="2" type="synonym">Ep2</name>
    <name evidence="7" type="synonym">Spag11</name>
</gene>
<organism>
    <name type="scientific">Rattus norvegicus</name>
    <name type="common">Rat</name>
    <dbReference type="NCBI Taxonomy" id="10116"/>
    <lineage>
        <taxon>Eukaryota</taxon>
        <taxon>Metazoa</taxon>
        <taxon>Chordata</taxon>
        <taxon>Craniata</taxon>
        <taxon>Vertebrata</taxon>
        <taxon>Euteleostomi</taxon>
        <taxon>Mammalia</taxon>
        <taxon>Eutheria</taxon>
        <taxon>Euarchontoglires</taxon>
        <taxon>Glires</taxon>
        <taxon>Rodentia</taxon>
        <taxon>Myomorpha</taxon>
        <taxon>Muroidea</taxon>
        <taxon>Muridae</taxon>
        <taxon>Murinae</taxon>
        <taxon>Rattus</taxon>
    </lineage>
</organism>
<proteinExistence type="evidence at transcript level"/>
<reference key="1">
    <citation type="journal article" date="2001" name="Science">
        <title>An antimicrobial peptide gene found in the male reproductive system of rats.</title>
        <authorList>
            <person name="Li P."/>
            <person name="Chan H.C."/>
            <person name="He B."/>
            <person name="So S.C."/>
            <person name="Chung Y.W."/>
            <person name="Shang Q."/>
            <person name="Zhang Y.-D."/>
            <person name="Zhang Y.-L."/>
        </authorList>
    </citation>
    <scope>NUCLEOTIDE SEQUENCE [GENOMIC DNA / MRNA]</scope>
    <scope>FUNCTION</scope>
    <scope>TISSUE SPECIFICITY</scope>
    <scope>DEVELOPMENTAL STAGE</scope>
    <source>
        <strain>Sprague-Dawley</strain>
        <tissue>Epididymis</tissue>
    </source>
</reference>
<sequence>MKVLLLFAVFFCLVQRNSGDIPPGIRNTVCFMQRGHCRLFMCRSGERKGDICSDPWNRCCVSSSIKNR</sequence>
<protein>
    <recommendedName>
        <fullName evidence="7">Sperm-associated antigen 11A</fullName>
    </recommendedName>
    <alternativeName>
        <fullName evidence="5">Antimicrobial-like protein Bin-1b</fullName>
    </alternativeName>
    <alternativeName>
        <fullName evidence="2">EP2 protein</fullName>
    </alternativeName>
</protein>
<comment type="function">
    <text evidence="4">Has antimicrobial activity against E.coli (PubMed:11230693). Plays a role in the defense response in the male reproductive tract, contributing to sperm maturation, storage and protection (PubMed:11230693).</text>
</comment>
<comment type="subcellular location">
    <subcellularLocation>
        <location evidence="6">Secreted</location>
    </subcellularLocation>
</comment>
<comment type="tissue specificity">
    <text evidence="4">Only expressed in epididymis (middle part of the caput).</text>
</comment>
<comment type="developmental stage">
    <text evidence="4">Its expression starts at 30 days of age, reaches a maximum during the sexually mature period, and then decreased in old rats.</text>
</comment>
<comment type="similarity">
    <text evidence="6">Belongs to the beta-defensin family.</text>
</comment>